<evidence type="ECO:0000255" key="1">
    <source>
        <dbReference type="HAMAP-Rule" id="MF_01395"/>
    </source>
</evidence>
<evidence type="ECO:0000255" key="2">
    <source>
        <dbReference type="PROSITE-ProRule" id="PRU01136"/>
    </source>
</evidence>
<proteinExistence type="inferred from homology"/>
<gene>
    <name evidence="1" type="primary">accD</name>
    <name type="ordered locus">YPTB2616</name>
</gene>
<sequence length="304" mass="33274">MSWIERILNKSNITQTRKASIPEGVWTKCDSCGQVLYRAELERNLEVCPKCDHHMRMSARARLHMLLDAGSEVELGSELEPKDILKFRDSKKYKDRISAAQKDTGEKDALVAMKGTLQGMPIVAASFEFAFMGGSMASVVGARFVRAVEQALEDNCPLVCFSSSGGARMQEALMSLMQMAKTSAALAKMQERGLPYISVLTDPTMGGVSASLAMLGDINIAEPKALIGFAGPRVIEQTVREKLPPGFQRSEFLIEKGAIDMIVRRPVMRQTLASILSKLTHQPQPSVVESKADTVAQPENQADV</sequence>
<keyword id="KW-0067">ATP-binding</keyword>
<keyword id="KW-0963">Cytoplasm</keyword>
<keyword id="KW-0275">Fatty acid biosynthesis</keyword>
<keyword id="KW-0276">Fatty acid metabolism</keyword>
<keyword id="KW-0444">Lipid biosynthesis</keyword>
<keyword id="KW-0443">Lipid metabolism</keyword>
<keyword id="KW-0479">Metal-binding</keyword>
<keyword id="KW-0547">Nucleotide-binding</keyword>
<keyword id="KW-0808">Transferase</keyword>
<keyword id="KW-0862">Zinc</keyword>
<keyword id="KW-0863">Zinc-finger</keyword>
<reference key="1">
    <citation type="journal article" date="2004" name="Proc. Natl. Acad. Sci. U.S.A.">
        <title>Insights into the evolution of Yersinia pestis through whole-genome comparison with Yersinia pseudotuberculosis.</title>
        <authorList>
            <person name="Chain P.S.G."/>
            <person name="Carniel E."/>
            <person name="Larimer F.W."/>
            <person name="Lamerdin J."/>
            <person name="Stoutland P.O."/>
            <person name="Regala W.M."/>
            <person name="Georgescu A.M."/>
            <person name="Vergez L.M."/>
            <person name="Land M.L."/>
            <person name="Motin V.L."/>
            <person name="Brubaker R.R."/>
            <person name="Fowler J."/>
            <person name="Hinnebusch J."/>
            <person name="Marceau M."/>
            <person name="Medigue C."/>
            <person name="Simonet M."/>
            <person name="Chenal-Francisque V."/>
            <person name="Souza B."/>
            <person name="Dacheux D."/>
            <person name="Elliott J.M."/>
            <person name="Derbise A."/>
            <person name="Hauser L.J."/>
            <person name="Garcia E."/>
        </authorList>
    </citation>
    <scope>NUCLEOTIDE SEQUENCE [LARGE SCALE GENOMIC DNA]</scope>
    <source>
        <strain>IP32953</strain>
    </source>
</reference>
<comment type="function">
    <text evidence="1">Component of the acetyl coenzyme A carboxylase (ACC) complex. Biotin carboxylase (BC) catalyzes the carboxylation of biotin on its carrier protein (BCCP) and then the CO(2) group is transferred by the transcarboxylase to acetyl-CoA to form malonyl-CoA.</text>
</comment>
<comment type="catalytic activity">
    <reaction evidence="1">
        <text>N(6)-carboxybiotinyl-L-lysyl-[protein] + acetyl-CoA = N(6)-biotinyl-L-lysyl-[protein] + malonyl-CoA</text>
        <dbReference type="Rhea" id="RHEA:54728"/>
        <dbReference type="Rhea" id="RHEA-COMP:10505"/>
        <dbReference type="Rhea" id="RHEA-COMP:10506"/>
        <dbReference type="ChEBI" id="CHEBI:57288"/>
        <dbReference type="ChEBI" id="CHEBI:57384"/>
        <dbReference type="ChEBI" id="CHEBI:83144"/>
        <dbReference type="ChEBI" id="CHEBI:83145"/>
        <dbReference type="EC" id="2.1.3.15"/>
    </reaction>
</comment>
<comment type="cofactor">
    <cofactor evidence="1">
        <name>Zn(2+)</name>
        <dbReference type="ChEBI" id="CHEBI:29105"/>
    </cofactor>
    <text evidence="1">Binds 1 zinc ion per subunit.</text>
</comment>
<comment type="pathway">
    <text evidence="1">Lipid metabolism; malonyl-CoA biosynthesis; malonyl-CoA from acetyl-CoA: step 1/1.</text>
</comment>
<comment type="subunit">
    <text evidence="1">Acetyl-CoA carboxylase is a heterohexamer composed of biotin carboxyl carrier protein (AccB), biotin carboxylase (AccC) and two subunits each of ACCase subunit alpha (AccA) and ACCase subunit beta (AccD).</text>
</comment>
<comment type="subcellular location">
    <subcellularLocation>
        <location evidence="1">Cytoplasm</location>
    </subcellularLocation>
</comment>
<comment type="similarity">
    <text evidence="1">Belongs to the AccD/PCCB family.</text>
</comment>
<feature type="chain" id="PRO_0000359109" description="Acetyl-coenzyme A carboxylase carboxyl transferase subunit beta">
    <location>
        <begin position="1"/>
        <end position="304"/>
    </location>
</feature>
<feature type="domain" description="CoA carboxyltransferase N-terminal" evidence="2">
    <location>
        <begin position="25"/>
        <end position="294"/>
    </location>
</feature>
<feature type="zinc finger region" description="C4-type" evidence="1">
    <location>
        <begin position="29"/>
        <end position="51"/>
    </location>
</feature>
<feature type="binding site" evidence="1">
    <location>
        <position position="29"/>
    </location>
    <ligand>
        <name>Zn(2+)</name>
        <dbReference type="ChEBI" id="CHEBI:29105"/>
    </ligand>
</feature>
<feature type="binding site" evidence="1">
    <location>
        <position position="32"/>
    </location>
    <ligand>
        <name>Zn(2+)</name>
        <dbReference type="ChEBI" id="CHEBI:29105"/>
    </ligand>
</feature>
<feature type="binding site" evidence="1">
    <location>
        <position position="48"/>
    </location>
    <ligand>
        <name>Zn(2+)</name>
        <dbReference type="ChEBI" id="CHEBI:29105"/>
    </ligand>
</feature>
<feature type="binding site" evidence="1">
    <location>
        <position position="51"/>
    </location>
    <ligand>
        <name>Zn(2+)</name>
        <dbReference type="ChEBI" id="CHEBI:29105"/>
    </ligand>
</feature>
<organism>
    <name type="scientific">Yersinia pseudotuberculosis serotype I (strain IP32953)</name>
    <dbReference type="NCBI Taxonomy" id="273123"/>
    <lineage>
        <taxon>Bacteria</taxon>
        <taxon>Pseudomonadati</taxon>
        <taxon>Pseudomonadota</taxon>
        <taxon>Gammaproteobacteria</taxon>
        <taxon>Enterobacterales</taxon>
        <taxon>Yersiniaceae</taxon>
        <taxon>Yersinia</taxon>
    </lineage>
</organism>
<accession>Q668X1</accession>
<dbReference type="EC" id="2.1.3.15" evidence="1"/>
<dbReference type="EMBL" id="BX936398">
    <property type="protein sequence ID" value="CAH21854.1"/>
    <property type="molecule type" value="Genomic_DNA"/>
</dbReference>
<dbReference type="RefSeq" id="WP_002209729.1">
    <property type="nucleotide sequence ID" value="NZ_CP009712.1"/>
</dbReference>
<dbReference type="SMR" id="Q668X1"/>
<dbReference type="GeneID" id="57975921"/>
<dbReference type="KEGG" id="ypo:BZ17_4023"/>
<dbReference type="KEGG" id="yps:YPTB2616"/>
<dbReference type="PATRIC" id="fig|273123.14.peg.4223"/>
<dbReference type="UniPathway" id="UPA00655">
    <property type="reaction ID" value="UER00711"/>
</dbReference>
<dbReference type="Proteomes" id="UP000001011">
    <property type="component" value="Chromosome"/>
</dbReference>
<dbReference type="GO" id="GO:0009329">
    <property type="term" value="C:acetate CoA-transferase complex"/>
    <property type="evidence" value="ECO:0007669"/>
    <property type="project" value="TreeGrafter"/>
</dbReference>
<dbReference type="GO" id="GO:0003989">
    <property type="term" value="F:acetyl-CoA carboxylase activity"/>
    <property type="evidence" value="ECO:0007669"/>
    <property type="project" value="InterPro"/>
</dbReference>
<dbReference type="GO" id="GO:0005524">
    <property type="term" value="F:ATP binding"/>
    <property type="evidence" value="ECO:0007669"/>
    <property type="project" value="UniProtKB-KW"/>
</dbReference>
<dbReference type="GO" id="GO:0016743">
    <property type="term" value="F:carboxyl- or carbamoyltransferase activity"/>
    <property type="evidence" value="ECO:0007669"/>
    <property type="project" value="UniProtKB-UniRule"/>
</dbReference>
<dbReference type="GO" id="GO:0008270">
    <property type="term" value="F:zinc ion binding"/>
    <property type="evidence" value="ECO:0007669"/>
    <property type="project" value="UniProtKB-UniRule"/>
</dbReference>
<dbReference type="GO" id="GO:0006633">
    <property type="term" value="P:fatty acid biosynthetic process"/>
    <property type="evidence" value="ECO:0007669"/>
    <property type="project" value="UniProtKB-KW"/>
</dbReference>
<dbReference type="GO" id="GO:2001295">
    <property type="term" value="P:malonyl-CoA biosynthetic process"/>
    <property type="evidence" value="ECO:0007669"/>
    <property type="project" value="UniProtKB-UniRule"/>
</dbReference>
<dbReference type="FunFam" id="3.90.226.10:FF:000013">
    <property type="entry name" value="Acetyl-coenzyme A carboxylase carboxyl transferase subunit beta"/>
    <property type="match status" value="1"/>
</dbReference>
<dbReference type="Gene3D" id="3.90.226.10">
    <property type="entry name" value="2-enoyl-CoA Hydratase, Chain A, domain 1"/>
    <property type="match status" value="1"/>
</dbReference>
<dbReference type="HAMAP" id="MF_01395">
    <property type="entry name" value="AcetylCoA_CT_beta"/>
    <property type="match status" value="1"/>
</dbReference>
<dbReference type="InterPro" id="IPR034733">
    <property type="entry name" value="AcCoA_carboxyl_beta"/>
</dbReference>
<dbReference type="InterPro" id="IPR000438">
    <property type="entry name" value="Acetyl_CoA_COase_Trfase_b_su"/>
</dbReference>
<dbReference type="InterPro" id="IPR029045">
    <property type="entry name" value="ClpP/crotonase-like_dom_sf"/>
</dbReference>
<dbReference type="InterPro" id="IPR011762">
    <property type="entry name" value="COA_CT_N"/>
</dbReference>
<dbReference type="InterPro" id="IPR041010">
    <property type="entry name" value="Znf-ACC"/>
</dbReference>
<dbReference type="NCBIfam" id="TIGR00515">
    <property type="entry name" value="accD"/>
    <property type="match status" value="1"/>
</dbReference>
<dbReference type="PANTHER" id="PTHR42995">
    <property type="entry name" value="ACETYL-COENZYME A CARBOXYLASE CARBOXYL TRANSFERASE SUBUNIT BETA, CHLOROPLASTIC"/>
    <property type="match status" value="1"/>
</dbReference>
<dbReference type="PANTHER" id="PTHR42995:SF5">
    <property type="entry name" value="ACETYL-COENZYME A CARBOXYLASE CARBOXYL TRANSFERASE SUBUNIT BETA, CHLOROPLASTIC"/>
    <property type="match status" value="1"/>
</dbReference>
<dbReference type="Pfam" id="PF01039">
    <property type="entry name" value="Carboxyl_trans"/>
    <property type="match status" value="1"/>
</dbReference>
<dbReference type="Pfam" id="PF17848">
    <property type="entry name" value="Zn_ribbon_ACC"/>
    <property type="match status" value="1"/>
</dbReference>
<dbReference type="PRINTS" id="PR01070">
    <property type="entry name" value="ACCCTRFRASEB"/>
</dbReference>
<dbReference type="SUPFAM" id="SSF52096">
    <property type="entry name" value="ClpP/crotonase"/>
    <property type="match status" value="1"/>
</dbReference>
<dbReference type="PROSITE" id="PS50980">
    <property type="entry name" value="COA_CT_NTER"/>
    <property type="match status" value="1"/>
</dbReference>
<name>ACCD_YERPS</name>
<protein>
    <recommendedName>
        <fullName evidence="1">Acetyl-coenzyme A carboxylase carboxyl transferase subunit beta</fullName>
        <shortName evidence="1">ACCase subunit beta</shortName>
        <shortName evidence="1">Acetyl-CoA carboxylase carboxyltransferase subunit beta</shortName>
        <ecNumber evidence="1">2.1.3.15</ecNumber>
    </recommendedName>
</protein>